<dbReference type="EMBL" id="CP000425">
    <property type="protein sequence ID" value="ABJ73418.1"/>
    <property type="molecule type" value="Genomic_DNA"/>
</dbReference>
<dbReference type="RefSeq" id="WP_011676766.1">
    <property type="nucleotide sequence ID" value="NC_008527.1"/>
</dbReference>
<dbReference type="SMR" id="Q02XA4"/>
<dbReference type="KEGG" id="llc:LACR_1934"/>
<dbReference type="HOGENOM" id="CLU_050669_0_1_9"/>
<dbReference type="Proteomes" id="UP000000240">
    <property type="component" value="Chromosome"/>
</dbReference>
<dbReference type="GO" id="GO:0005886">
    <property type="term" value="C:plasma membrane"/>
    <property type="evidence" value="ECO:0007669"/>
    <property type="project" value="UniProtKB-SubCell"/>
</dbReference>
<dbReference type="GO" id="GO:0045259">
    <property type="term" value="C:proton-transporting ATP synthase complex"/>
    <property type="evidence" value="ECO:0007669"/>
    <property type="project" value="UniProtKB-KW"/>
</dbReference>
<dbReference type="GO" id="GO:0005524">
    <property type="term" value="F:ATP binding"/>
    <property type="evidence" value="ECO:0007669"/>
    <property type="project" value="UniProtKB-UniRule"/>
</dbReference>
<dbReference type="GO" id="GO:0046933">
    <property type="term" value="F:proton-transporting ATP synthase activity, rotational mechanism"/>
    <property type="evidence" value="ECO:0007669"/>
    <property type="project" value="UniProtKB-UniRule"/>
</dbReference>
<dbReference type="GO" id="GO:0042777">
    <property type="term" value="P:proton motive force-driven plasma membrane ATP synthesis"/>
    <property type="evidence" value="ECO:0007669"/>
    <property type="project" value="UniProtKB-UniRule"/>
</dbReference>
<dbReference type="CDD" id="cd12151">
    <property type="entry name" value="F1-ATPase_gamma"/>
    <property type="match status" value="1"/>
</dbReference>
<dbReference type="FunFam" id="3.40.1380.10:FF:000002">
    <property type="entry name" value="ATP synthase gamma chain"/>
    <property type="match status" value="1"/>
</dbReference>
<dbReference type="Gene3D" id="3.40.1380.10">
    <property type="match status" value="1"/>
</dbReference>
<dbReference type="Gene3D" id="1.10.287.80">
    <property type="entry name" value="ATP synthase, gamma subunit, helix hairpin domain"/>
    <property type="match status" value="1"/>
</dbReference>
<dbReference type="HAMAP" id="MF_00815">
    <property type="entry name" value="ATP_synth_gamma_bact"/>
    <property type="match status" value="1"/>
</dbReference>
<dbReference type="InterPro" id="IPR035968">
    <property type="entry name" value="ATP_synth_F1_ATPase_gsu"/>
</dbReference>
<dbReference type="InterPro" id="IPR000131">
    <property type="entry name" value="ATP_synth_F1_gsu"/>
</dbReference>
<dbReference type="InterPro" id="IPR023632">
    <property type="entry name" value="ATP_synth_F1_gsu_CS"/>
</dbReference>
<dbReference type="NCBIfam" id="TIGR01146">
    <property type="entry name" value="ATPsyn_F1gamma"/>
    <property type="match status" value="1"/>
</dbReference>
<dbReference type="NCBIfam" id="NF004147">
    <property type="entry name" value="PRK05621.2-1"/>
    <property type="match status" value="1"/>
</dbReference>
<dbReference type="PANTHER" id="PTHR11693">
    <property type="entry name" value="ATP SYNTHASE GAMMA CHAIN"/>
    <property type="match status" value="1"/>
</dbReference>
<dbReference type="PANTHER" id="PTHR11693:SF22">
    <property type="entry name" value="ATP SYNTHASE SUBUNIT GAMMA, MITOCHONDRIAL"/>
    <property type="match status" value="1"/>
</dbReference>
<dbReference type="Pfam" id="PF00231">
    <property type="entry name" value="ATP-synt"/>
    <property type="match status" value="1"/>
</dbReference>
<dbReference type="PRINTS" id="PR00126">
    <property type="entry name" value="ATPASEGAMMA"/>
</dbReference>
<dbReference type="SUPFAM" id="SSF52943">
    <property type="entry name" value="ATP synthase (F1-ATPase), gamma subunit"/>
    <property type="match status" value="1"/>
</dbReference>
<dbReference type="PROSITE" id="PS00153">
    <property type="entry name" value="ATPASE_GAMMA"/>
    <property type="match status" value="1"/>
</dbReference>
<comment type="function">
    <text evidence="1">Produces ATP from ADP in the presence of a proton gradient across the membrane. The gamma chain is believed to be important in regulating ATPase activity and the flow of protons through the CF(0) complex.</text>
</comment>
<comment type="subunit">
    <text evidence="1">F-type ATPases have 2 components, CF(1) - the catalytic core - and CF(0) - the membrane proton channel. CF(1) has five subunits: alpha(3), beta(3), gamma(1), delta(1), epsilon(1). CF(0) has three main subunits: a, b and c.</text>
</comment>
<comment type="subcellular location">
    <subcellularLocation>
        <location evidence="1">Cell membrane</location>
        <topology evidence="1">Peripheral membrane protein</topology>
    </subcellularLocation>
</comment>
<comment type="similarity">
    <text evidence="1">Belongs to the ATPase gamma chain family.</text>
</comment>
<organism>
    <name type="scientific">Lactococcus lactis subsp. cremoris (strain SK11)</name>
    <dbReference type="NCBI Taxonomy" id="272622"/>
    <lineage>
        <taxon>Bacteria</taxon>
        <taxon>Bacillati</taxon>
        <taxon>Bacillota</taxon>
        <taxon>Bacilli</taxon>
        <taxon>Lactobacillales</taxon>
        <taxon>Streptococcaceae</taxon>
        <taxon>Lactococcus</taxon>
        <taxon>Lactococcus cremoris subsp. cremoris</taxon>
    </lineage>
</organism>
<gene>
    <name evidence="1" type="primary">atpG</name>
    <name type="ordered locus">LACR_1934</name>
</gene>
<reference key="1">
    <citation type="journal article" date="2006" name="Proc. Natl. Acad. Sci. U.S.A.">
        <title>Comparative genomics of the lactic acid bacteria.</title>
        <authorList>
            <person name="Makarova K.S."/>
            <person name="Slesarev A."/>
            <person name="Wolf Y.I."/>
            <person name="Sorokin A."/>
            <person name="Mirkin B."/>
            <person name="Koonin E.V."/>
            <person name="Pavlov A."/>
            <person name="Pavlova N."/>
            <person name="Karamychev V."/>
            <person name="Polouchine N."/>
            <person name="Shakhova V."/>
            <person name="Grigoriev I."/>
            <person name="Lou Y."/>
            <person name="Rohksar D."/>
            <person name="Lucas S."/>
            <person name="Huang K."/>
            <person name="Goodstein D.M."/>
            <person name="Hawkins T."/>
            <person name="Plengvidhya V."/>
            <person name="Welker D."/>
            <person name="Hughes J."/>
            <person name="Goh Y."/>
            <person name="Benson A."/>
            <person name="Baldwin K."/>
            <person name="Lee J.-H."/>
            <person name="Diaz-Muniz I."/>
            <person name="Dosti B."/>
            <person name="Smeianov V."/>
            <person name="Wechter W."/>
            <person name="Barabote R."/>
            <person name="Lorca G."/>
            <person name="Altermann E."/>
            <person name="Barrangou R."/>
            <person name="Ganesan B."/>
            <person name="Xie Y."/>
            <person name="Rawsthorne H."/>
            <person name="Tamir D."/>
            <person name="Parker C."/>
            <person name="Breidt F."/>
            <person name="Broadbent J.R."/>
            <person name="Hutkins R."/>
            <person name="O'Sullivan D."/>
            <person name="Steele J."/>
            <person name="Unlu G."/>
            <person name="Saier M.H. Jr."/>
            <person name="Klaenhammer T."/>
            <person name="Richardson P."/>
            <person name="Kozyavkin S."/>
            <person name="Weimer B.C."/>
            <person name="Mills D.A."/>
        </authorList>
    </citation>
    <scope>NUCLEOTIDE SEQUENCE [LARGE SCALE GENOMIC DNA]</scope>
    <source>
        <strain>SK11</strain>
    </source>
</reference>
<keyword id="KW-0066">ATP synthesis</keyword>
<keyword id="KW-1003">Cell membrane</keyword>
<keyword id="KW-0139">CF(1)</keyword>
<keyword id="KW-0375">Hydrogen ion transport</keyword>
<keyword id="KW-0406">Ion transport</keyword>
<keyword id="KW-0472">Membrane</keyword>
<keyword id="KW-0813">Transport</keyword>
<accession>Q02XA4</accession>
<proteinExistence type="inferred from homology"/>
<feature type="chain" id="PRO_1000053238" description="ATP synthase gamma chain">
    <location>
        <begin position="1"/>
        <end position="289"/>
    </location>
</feature>
<evidence type="ECO:0000255" key="1">
    <source>
        <dbReference type="HAMAP-Rule" id="MF_00815"/>
    </source>
</evidence>
<name>ATPG_LACLS</name>
<protein>
    <recommendedName>
        <fullName evidence="1">ATP synthase gamma chain</fullName>
    </recommendedName>
    <alternativeName>
        <fullName evidence="1">ATP synthase F1 sector gamma subunit</fullName>
    </alternativeName>
    <alternativeName>
        <fullName evidence="1">F-ATPase gamma subunit</fullName>
    </alternativeName>
</protein>
<sequence>MGASLNEIKTKIASTKKTSQITGAMQMVSAAKLQKAESHAKAFQTYAEKVRKITTDLVSSDNEPAKNPMMIKREVKKTGYLVITSDRGLVGGYNSNILKSVISNIRKRHTNESEYTILALGGTGADFFKARNVKVSYVLRGLSDQPTFEEVRAIVTEAVEEYQAEEFDELYVCYNHHVNSLVSEARMEKMLPISFDEKGDEKASLVTFELEPDRETILNQLLPQYAESMIYGSIVDAKTAEHAAGMTAMRTATDNAHSVINDLTIQYNRARQASITQEITEIVAGASAL</sequence>